<feature type="chain" id="PRO_0000162018" description="Uncharacterized RNA methyltransferase SAR1988">
    <location>
        <begin position="1"/>
        <end position="453"/>
    </location>
</feature>
<feature type="active site" description="Nucleophile" evidence="2">
    <location>
        <position position="411"/>
    </location>
</feature>
<feature type="binding site" evidence="1">
    <location>
        <position position="74"/>
    </location>
    <ligand>
        <name>[4Fe-4S] cluster</name>
        <dbReference type="ChEBI" id="CHEBI:49883"/>
    </ligand>
</feature>
<feature type="binding site" evidence="1">
    <location>
        <position position="80"/>
    </location>
    <ligand>
        <name>[4Fe-4S] cluster</name>
        <dbReference type="ChEBI" id="CHEBI:49883"/>
    </ligand>
</feature>
<feature type="binding site" evidence="1">
    <location>
        <position position="83"/>
    </location>
    <ligand>
        <name>[4Fe-4S] cluster</name>
        <dbReference type="ChEBI" id="CHEBI:49883"/>
    </ligand>
</feature>
<feature type="binding site" evidence="1">
    <location>
        <position position="162"/>
    </location>
    <ligand>
        <name>[4Fe-4S] cluster</name>
        <dbReference type="ChEBI" id="CHEBI:49883"/>
    </ligand>
</feature>
<feature type="binding site" evidence="2">
    <location>
        <position position="286"/>
    </location>
    <ligand>
        <name>S-adenosyl-L-methionine</name>
        <dbReference type="ChEBI" id="CHEBI:59789"/>
    </ligand>
</feature>
<feature type="binding site" evidence="2">
    <location>
        <position position="315"/>
    </location>
    <ligand>
        <name>S-adenosyl-L-methionine</name>
        <dbReference type="ChEBI" id="CHEBI:59789"/>
    </ligand>
</feature>
<feature type="binding site" evidence="2">
    <location>
        <position position="336"/>
    </location>
    <ligand>
        <name>S-adenosyl-L-methionine</name>
        <dbReference type="ChEBI" id="CHEBI:59789"/>
    </ligand>
</feature>
<feature type="binding site" evidence="2">
    <location>
        <position position="384"/>
    </location>
    <ligand>
        <name>S-adenosyl-L-methionine</name>
        <dbReference type="ChEBI" id="CHEBI:59789"/>
    </ligand>
</feature>
<sequence length="453" mass="51622">MQAIAKNDIKTGTVVDLTHEGHGVVKIDRFPIFIPQALINEQIEYKIIKVKKNFAIGKLLNINTRSENRVAPPCIYYERCGGCQLQHLSYEAQLEMKKEQVINLFQRKAHFDNSKINDTVGMTDPWRYRNKSQIPVGKNEQNEVIMGFYRQRSHDIIDMGSCLIQDSQHQEVMNEVKSILKDLNVSIYQEQLKKGLMRHLVVRTGYHTDEMMVIFVTNGKNWPQKNAVVEKILDAFPNVTSIKQNINDSHSNVIMGRQSITLYGKDTIIDQLTDSTFKISDQSFYQINSEQTEKLYNKAIEYAQLTGNEVVLDTYCGIGTIGLYMAPHAKHVYGVEVVPSAIEDAQQNATINQCNNTTFVCGKAEEVILQWKAQGIKPDVVMVDPPRKGCDETFIQTLLTLEPKRIVYISCNPSTQQRDALLLAEKYQLEEVTPVDMFPQTTHVETVALFNLK</sequence>
<name>Y1988_STAAR</name>
<gene>
    <name type="ordered locus">SAR1988</name>
</gene>
<dbReference type="EC" id="2.1.1.-"/>
<dbReference type="EMBL" id="BX571856">
    <property type="protein sequence ID" value="CAG40974.1"/>
    <property type="molecule type" value="Genomic_DNA"/>
</dbReference>
<dbReference type="SMR" id="Q6GFG0"/>
<dbReference type="KEGG" id="sar:SAR1988"/>
<dbReference type="HOGENOM" id="CLU_014689_7_0_9"/>
<dbReference type="Proteomes" id="UP000000596">
    <property type="component" value="Chromosome"/>
</dbReference>
<dbReference type="GO" id="GO:0051539">
    <property type="term" value="F:4 iron, 4 sulfur cluster binding"/>
    <property type="evidence" value="ECO:0007669"/>
    <property type="project" value="UniProtKB-KW"/>
</dbReference>
<dbReference type="GO" id="GO:0046872">
    <property type="term" value="F:metal ion binding"/>
    <property type="evidence" value="ECO:0007669"/>
    <property type="project" value="UniProtKB-KW"/>
</dbReference>
<dbReference type="GO" id="GO:0070041">
    <property type="term" value="F:rRNA (uridine-C5-)-methyltransferase activity"/>
    <property type="evidence" value="ECO:0007669"/>
    <property type="project" value="TreeGrafter"/>
</dbReference>
<dbReference type="GO" id="GO:0070475">
    <property type="term" value="P:rRNA base methylation"/>
    <property type="evidence" value="ECO:0007669"/>
    <property type="project" value="TreeGrafter"/>
</dbReference>
<dbReference type="CDD" id="cd02440">
    <property type="entry name" value="AdoMet_MTases"/>
    <property type="match status" value="1"/>
</dbReference>
<dbReference type="FunFam" id="3.40.50.150:FF:000009">
    <property type="entry name" value="23S rRNA (Uracil(1939)-C(5))-methyltransferase RlmD"/>
    <property type="match status" value="1"/>
</dbReference>
<dbReference type="FunFam" id="2.40.50.140:FF:000097">
    <property type="entry name" value="23S rRNA (uracil(1939)-C(5))-methyltransferase RlmD"/>
    <property type="match status" value="1"/>
</dbReference>
<dbReference type="FunFam" id="2.40.50.1070:FF:000003">
    <property type="entry name" value="23S rRNA (Uracil-5-)-methyltransferase RumA"/>
    <property type="match status" value="1"/>
</dbReference>
<dbReference type="Gene3D" id="2.40.50.1070">
    <property type="match status" value="1"/>
</dbReference>
<dbReference type="Gene3D" id="2.40.50.140">
    <property type="entry name" value="Nucleic acid-binding proteins"/>
    <property type="match status" value="1"/>
</dbReference>
<dbReference type="Gene3D" id="3.40.50.150">
    <property type="entry name" value="Vaccinia Virus protein VP39"/>
    <property type="match status" value="1"/>
</dbReference>
<dbReference type="InterPro" id="IPR030390">
    <property type="entry name" value="MeTrfase_TrmA_AS"/>
</dbReference>
<dbReference type="InterPro" id="IPR030391">
    <property type="entry name" value="MeTrfase_TrmA_CS"/>
</dbReference>
<dbReference type="InterPro" id="IPR012340">
    <property type="entry name" value="NA-bd_OB-fold"/>
</dbReference>
<dbReference type="InterPro" id="IPR029063">
    <property type="entry name" value="SAM-dependent_MTases_sf"/>
</dbReference>
<dbReference type="InterPro" id="IPR010280">
    <property type="entry name" value="U5_MeTrfase_fam"/>
</dbReference>
<dbReference type="NCBIfam" id="TIGR00479">
    <property type="entry name" value="rumA"/>
    <property type="match status" value="1"/>
</dbReference>
<dbReference type="PANTHER" id="PTHR11061">
    <property type="entry name" value="RNA M5U METHYLTRANSFERASE"/>
    <property type="match status" value="1"/>
</dbReference>
<dbReference type="PANTHER" id="PTHR11061:SF30">
    <property type="entry name" value="TRNA (URACIL(54)-C(5))-METHYLTRANSFERASE"/>
    <property type="match status" value="1"/>
</dbReference>
<dbReference type="Pfam" id="PF05958">
    <property type="entry name" value="tRNA_U5-meth_tr"/>
    <property type="match status" value="1"/>
</dbReference>
<dbReference type="SUPFAM" id="SSF50249">
    <property type="entry name" value="Nucleic acid-binding proteins"/>
    <property type="match status" value="1"/>
</dbReference>
<dbReference type="SUPFAM" id="SSF53335">
    <property type="entry name" value="S-adenosyl-L-methionine-dependent methyltransferases"/>
    <property type="match status" value="1"/>
</dbReference>
<dbReference type="PROSITE" id="PS51687">
    <property type="entry name" value="SAM_MT_RNA_M5U"/>
    <property type="match status" value="1"/>
</dbReference>
<dbReference type="PROSITE" id="PS01230">
    <property type="entry name" value="TRMA_1"/>
    <property type="match status" value="1"/>
</dbReference>
<dbReference type="PROSITE" id="PS01231">
    <property type="entry name" value="TRMA_2"/>
    <property type="match status" value="1"/>
</dbReference>
<keyword id="KW-0004">4Fe-4S</keyword>
<keyword id="KW-0408">Iron</keyword>
<keyword id="KW-0411">Iron-sulfur</keyword>
<keyword id="KW-0479">Metal-binding</keyword>
<keyword id="KW-0489">Methyltransferase</keyword>
<keyword id="KW-0949">S-adenosyl-L-methionine</keyword>
<keyword id="KW-0808">Transferase</keyword>
<comment type="similarity">
    <text evidence="2">Belongs to the class I-like SAM-binding methyltransferase superfamily. RNA M5U methyltransferase family.</text>
</comment>
<protein>
    <recommendedName>
        <fullName>Uncharacterized RNA methyltransferase SAR1988</fullName>
        <ecNumber>2.1.1.-</ecNumber>
    </recommendedName>
</protein>
<reference key="1">
    <citation type="journal article" date="2004" name="Proc. Natl. Acad. Sci. U.S.A.">
        <title>Complete genomes of two clinical Staphylococcus aureus strains: evidence for the rapid evolution of virulence and drug resistance.</title>
        <authorList>
            <person name="Holden M.T.G."/>
            <person name="Feil E.J."/>
            <person name="Lindsay J.A."/>
            <person name="Peacock S.J."/>
            <person name="Day N.P.J."/>
            <person name="Enright M.C."/>
            <person name="Foster T.J."/>
            <person name="Moore C.E."/>
            <person name="Hurst L."/>
            <person name="Atkin R."/>
            <person name="Barron A."/>
            <person name="Bason N."/>
            <person name="Bentley S.D."/>
            <person name="Chillingworth C."/>
            <person name="Chillingworth T."/>
            <person name="Churcher C."/>
            <person name="Clark L."/>
            <person name="Corton C."/>
            <person name="Cronin A."/>
            <person name="Doggett J."/>
            <person name="Dowd L."/>
            <person name="Feltwell T."/>
            <person name="Hance Z."/>
            <person name="Harris B."/>
            <person name="Hauser H."/>
            <person name="Holroyd S."/>
            <person name="Jagels K."/>
            <person name="James K.D."/>
            <person name="Lennard N."/>
            <person name="Line A."/>
            <person name="Mayes R."/>
            <person name="Moule S."/>
            <person name="Mungall K."/>
            <person name="Ormond D."/>
            <person name="Quail M.A."/>
            <person name="Rabbinowitsch E."/>
            <person name="Rutherford K.M."/>
            <person name="Sanders M."/>
            <person name="Sharp S."/>
            <person name="Simmonds M."/>
            <person name="Stevens K."/>
            <person name="Whitehead S."/>
            <person name="Barrell B.G."/>
            <person name="Spratt B.G."/>
            <person name="Parkhill J."/>
        </authorList>
    </citation>
    <scope>NUCLEOTIDE SEQUENCE [LARGE SCALE GENOMIC DNA]</scope>
    <source>
        <strain>MRSA252</strain>
    </source>
</reference>
<accession>Q6GFG0</accession>
<proteinExistence type="inferred from homology"/>
<evidence type="ECO:0000250" key="1"/>
<evidence type="ECO:0000255" key="2">
    <source>
        <dbReference type="PROSITE-ProRule" id="PRU01024"/>
    </source>
</evidence>
<organism>
    <name type="scientific">Staphylococcus aureus (strain MRSA252)</name>
    <dbReference type="NCBI Taxonomy" id="282458"/>
    <lineage>
        <taxon>Bacteria</taxon>
        <taxon>Bacillati</taxon>
        <taxon>Bacillota</taxon>
        <taxon>Bacilli</taxon>
        <taxon>Bacillales</taxon>
        <taxon>Staphylococcaceae</taxon>
        <taxon>Staphylococcus</taxon>
    </lineage>
</organism>